<reference key="1">
    <citation type="journal article" date="2005" name="Biochemistry">
        <title>Identification in the mold Hypocrea jecorina of the first fungal D-galacturonic acid reductase.</title>
        <authorList>
            <person name="Kuorelahti S."/>
            <person name="Kalkkinen N."/>
            <person name="Penttila M."/>
            <person name="Londesborough J."/>
            <person name="Richard P."/>
        </authorList>
    </citation>
    <scope>NUCLEOTIDE SEQUENCE [MRNA]</scope>
    <scope>PROTEIN SEQUENCE OF 232-247 AND 294-309</scope>
    <scope>FUNCTION</scope>
    <scope>CATALYTIC ACTIVITY</scope>
    <scope>BIOPHYSICOCHEMICAL PROPERTIES</scope>
    <scope>PATHWAY</scope>
    <source>
        <strain>ATCC 56765 / Rut C-30</strain>
    </source>
</reference>
<keyword id="KW-0119">Carbohydrate metabolism</keyword>
<keyword id="KW-0903">Direct protein sequencing</keyword>
<keyword id="KW-0521">NADP</keyword>
<keyword id="KW-0560">Oxidoreductase</keyword>
<protein>
    <recommendedName>
        <fullName>D-galacturonate reductase</fullName>
        <ecNumber>1.1.1.365</ecNumber>
    </recommendedName>
    <alternativeName>
        <fullName>D-galacturonic acid reductase</fullName>
    </alternativeName>
</protein>
<sequence length="309" mass="33997">MVATSFKLNNGLEIPAVGLGTWQSKAGEVKAAVSYALQIGYKLIDGAYCYGNEDEVGEGLKEAFAAGVKREDIFVVTKIWATYNTRVVLGLDKSLRSLGLDYVDLLLVHWPVLLNPEGNHDKFPTLPDGKRDVIWDYNHVDGWKQMEAVLATGKTKSIGVSNYSKKYLEQLLPHATVIPAVNQIENHPSLPQQEIVDFCKEKGIHIMAYSPLGSTGSPLMSADPVVKIAEKKGISPTTVLLSYHVNRGSTVLAKSVTPARIKANLEIVDLDDEDMKLLNDYSNDLASKGELKRYVYPPFGIDFGFPDKS</sequence>
<evidence type="ECO:0000250" key="1"/>
<evidence type="ECO:0000269" key="2">
    <source>
    </source>
</evidence>
<evidence type="ECO:0000305" key="3"/>
<gene>
    <name type="primary">gar1</name>
</gene>
<proteinExistence type="evidence at protein level"/>
<name>GAR1_HYPJE</name>
<accession>Q3ZFI7</accession>
<comment type="function">
    <text evidence="2">Mediates the reduction of D-galacturonate to L-galactonate, the first step in D-galacturonate catabolic process. Also has activity with D-glucuronate and DL-glyceraldehyde. No activity is observed with D-glucose, D-fructose, D-xylose, D-galactose, L-arabinose or D-mannose. Activity is seen only with NADPH and not with NADH.</text>
</comment>
<comment type="catalytic activity">
    <reaction evidence="2">
        <text>L-galactonate + NADP(+) = aldehydo-D-galacturonate + NADPH + H(+)</text>
        <dbReference type="Rhea" id="RHEA:26345"/>
        <dbReference type="ChEBI" id="CHEBI:12952"/>
        <dbReference type="ChEBI" id="CHEBI:15378"/>
        <dbReference type="ChEBI" id="CHEBI:53071"/>
        <dbReference type="ChEBI" id="CHEBI:57783"/>
        <dbReference type="ChEBI" id="CHEBI:58349"/>
        <dbReference type="EC" id="1.1.1.365"/>
    </reaction>
</comment>
<comment type="biophysicochemical properties">
    <kinetics>
        <KM evidence="2">6 mM for D-galacturonate</KM>
        <KM evidence="2">30 uM for NADPH</KM>
        <KM evidence="2">11 mM for D-glucuronate</KM>
        <KM evidence="2">6 mM for DL-glyceraldehyde</KM>
        <KM evidence="2">30 uM for NADP(+)</KM>
        <Vmax evidence="2">40.0 umol/min/mg enzyme with D-galacturonate acid and NADPH as substrates</Vmax>
        <Vmax evidence="2">25.0 umol/min/mg enzyme with D-glucuronate as substrate</Vmax>
        <Vmax evidence="2">7.0 umol/min/mg enzyme with DL-glyceraldehyde as substrate</Vmax>
    </kinetics>
</comment>
<comment type="pathway">
    <text evidence="2">Carbohydrate acid metabolism.</text>
</comment>
<comment type="similarity">
    <text evidence="3">Belongs to the aldo/keto reductase family.</text>
</comment>
<dbReference type="EC" id="1.1.1.365"/>
<dbReference type="EMBL" id="AY862503">
    <property type="protein sequence ID" value="AAX54673.1"/>
    <property type="molecule type" value="mRNA"/>
</dbReference>
<dbReference type="SMR" id="Q3ZFI7"/>
<dbReference type="KEGG" id="ag:AAX54673"/>
<dbReference type="VEuPathDB" id="FungiDB:TrQ_005176"/>
<dbReference type="OMA" id="MVNQIFL"/>
<dbReference type="BioCyc" id="MetaCyc:MONOMER-15601"/>
<dbReference type="SABIO-RK" id="Q3ZFI7"/>
<dbReference type="GO" id="GO:0102098">
    <property type="term" value="F:D-galacturonate reductase activity"/>
    <property type="evidence" value="ECO:0007669"/>
    <property type="project" value="UniProtKB-EC"/>
</dbReference>
<dbReference type="GO" id="GO:0016616">
    <property type="term" value="F:oxidoreductase activity, acting on the CH-OH group of donors, NAD or NADP as acceptor"/>
    <property type="evidence" value="ECO:0000314"/>
    <property type="project" value="UniProtKB"/>
</dbReference>
<dbReference type="GO" id="GO:0019698">
    <property type="term" value="P:D-galacturonate catabolic process"/>
    <property type="evidence" value="ECO:0000314"/>
    <property type="project" value="UniProtKB"/>
</dbReference>
<dbReference type="CDD" id="cd19121">
    <property type="entry name" value="AKR_AKR3D1"/>
    <property type="match status" value="1"/>
</dbReference>
<dbReference type="FunFam" id="3.20.20.100:FF:000007">
    <property type="entry name" value="NAD(P)H-dependent D-xylose reductase xyl1"/>
    <property type="match status" value="1"/>
</dbReference>
<dbReference type="Gene3D" id="3.20.20.100">
    <property type="entry name" value="NADP-dependent oxidoreductase domain"/>
    <property type="match status" value="1"/>
</dbReference>
<dbReference type="InterPro" id="IPR020471">
    <property type="entry name" value="AKR"/>
</dbReference>
<dbReference type="InterPro" id="IPR044495">
    <property type="entry name" value="AKR3D"/>
</dbReference>
<dbReference type="InterPro" id="IPR018170">
    <property type="entry name" value="Aldo/ket_reductase_CS"/>
</dbReference>
<dbReference type="InterPro" id="IPR023210">
    <property type="entry name" value="NADP_OxRdtase_dom"/>
</dbReference>
<dbReference type="InterPro" id="IPR036812">
    <property type="entry name" value="NADP_OxRdtase_dom_sf"/>
</dbReference>
<dbReference type="PANTHER" id="PTHR11732">
    <property type="entry name" value="ALDO/KETO REDUCTASE"/>
    <property type="match status" value="1"/>
</dbReference>
<dbReference type="Pfam" id="PF00248">
    <property type="entry name" value="Aldo_ket_red"/>
    <property type="match status" value="1"/>
</dbReference>
<dbReference type="PIRSF" id="PIRSF000097">
    <property type="entry name" value="AKR"/>
    <property type="match status" value="1"/>
</dbReference>
<dbReference type="PRINTS" id="PR00069">
    <property type="entry name" value="ALDKETRDTASE"/>
</dbReference>
<dbReference type="SUPFAM" id="SSF51430">
    <property type="entry name" value="NAD(P)-linked oxidoreductase"/>
    <property type="match status" value="1"/>
</dbReference>
<dbReference type="PROSITE" id="PS00062">
    <property type="entry name" value="ALDOKETO_REDUCTASE_2"/>
    <property type="match status" value="1"/>
</dbReference>
<dbReference type="PROSITE" id="PS00063">
    <property type="entry name" value="ALDOKETO_REDUCTASE_3"/>
    <property type="match status" value="1"/>
</dbReference>
<organism>
    <name type="scientific">Hypocrea jecorina</name>
    <name type="common">Trichoderma reesei</name>
    <dbReference type="NCBI Taxonomy" id="51453"/>
    <lineage>
        <taxon>Eukaryota</taxon>
        <taxon>Fungi</taxon>
        <taxon>Dikarya</taxon>
        <taxon>Ascomycota</taxon>
        <taxon>Pezizomycotina</taxon>
        <taxon>Sordariomycetes</taxon>
        <taxon>Hypocreomycetidae</taxon>
        <taxon>Hypocreales</taxon>
        <taxon>Hypocreaceae</taxon>
        <taxon>Trichoderma</taxon>
    </lineage>
</organism>
<feature type="chain" id="PRO_0000425566" description="D-galacturonate reductase">
    <location>
        <begin position="1"/>
        <end position="309"/>
    </location>
</feature>
<feature type="active site" description="Proton donor" evidence="1">
    <location>
        <position position="50"/>
    </location>
</feature>
<feature type="binding site" evidence="1">
    <location>
        <position position="109"/>
    </location>
    <ligand>
        <name>substrate</name>
    </ligand>
</feature>
<feature type="binding site" evidence="1">
    <location>
        <begin position="210"/>
        <end position="264"/>
    </location>
    <ligand>
        <name>NADP(+)</name>
        <dbReference type="ChEBI" id="CHEBI:58349"/>
    </ligand>
</feature>
<feature type="sequence conflict" description="In Ref. 1; AA sequence." evidence="3" ref="1">
    <original>G</original>
    <variation>GFP</variation>
    <location>
        <position position="304"/>
    </location>
</feature>